<accession>B1IVJ2</accession>
<evidence type="ECO:0000255" key="1">
    <source>
        <dbReference type="HAMAP-Rule" id="MF_00672"/>
    </source>
</evidence>
<reference key="1">
    <citation type="submission" date="2008-02" db="EMBL/GenBank/DDBJ databases">
        <title>Complete sequence of Escherichia coli C str. ATCC 8739.</title>
        <authorList>
            <person name="Copeland A."/>
            <person name="Lucas S."/>
            <person name="Lapidus A."/>
            <person name="Glavina del Rio T."/>
            <person name="Dalin E."/>
            <person name="Tice H."/>
            <person name="Bruce D."/>
            <person name="Goodwin L."/>
            <person name="Pitluck S."/>
            <person name="Kiss H."/>
            <person name="Brettin T."/>
            <person name="Detter J.C."/>
            <person name="Han C."/>
            <person name="Kuske C.R."/>
            <person name="Schmutz J."/>
            <person name="Larimer F."/>
            <person name="Land M."/>
            <person name="Hauser L."/>
            <person name="Kyrpides N."/>
            <person name="Mikhailova N."/>
            <person name="Ingram L."/>
            <person name="Richardson P."/>
        </authorList>
    </citation>
    <scope>NUCLEOTIDE SEQUENCE [LARGE SCALE GENOMIC DNA]</scope>
    <source>
        <strain>ATCC 8739 / DSM 1576 / NBRC 3972 / NCIMB 8545 / WDCM 00012 / Crooks</strain>
    </source>
</reference>
<protein>
    <recommendedName>
        <fullName evidence="1">UPF0761 membrane protein YihY</fullName>
    </recommendedName>
</protein>
<sequence length="290" mass="32839">MLKTIQDKARHRTRPLWAWLKLLWQRIDEDNMTTLAGNLAYVSLLSLVPLVAVVFALFAAFPMFSDVSIQLRHFIFANFLPATGDVIQRYIEQFVANSNKMTAVGACGLIVTALLLMYSIDSALNTIWRSKRARPKIYSFAVYWMILTLGPLLAGASLAISSYLLSLRWASDLNTVIDNVLRIFPLLLSWISFWLLYSIVPTIRVPNRDAIVGAFVAALLFEAGKKGFALYITMFPSYQLIYGVLAVIPILFVWVYWTWCIVLLGAEITVTLGEYRKLKQAAEQEEDDEP</sequence>
<comment type="subcellular location">
    <subcellularLocation>
        <location evidence="1">Cell inner membrane</location>
        <topology evidence="1">Multi-pass membrane protein</topology>
    </subcellularLocation>
</comment>
<comment type="similarity">
    <text evidence="1">Belongs to the UPF0761 family.</text>
</comment>
<proteinExistence type="inferred from homology"/>
<dbReference type="EMBL" id="CP000946">
    <property type="protein sequence ID" value="ACA79729.1"/>
    <property type="molecule type" value="Genomic_DNA"/>
</dbReference>
<dbReference type="RefSeq" id="WP_000920762.1">
    <property type="nucleotide sequence ID" value="NZ_MTFT01000008.1"/>
</dbReference>
<dbReference type="KEGG" id="ecl:EcolC_4132"/>
<dbReference type="HOGENOM" id="CLU_032288_0_0_6"/>
<dbReference type="GO" id="GO:0005886">
    <property type="term" value="C:plasma membrane"/>
    <property type="evidence" value="ECO:0007669"/>
    <property type="project" value="UniProtKB-SubCell"/>
</dbReference>
<dbReference type="HAMAP" id="MF_00672">
    <property type="entry name" value="UPF0761"/>
    <property type="match status" value="1"/>
</dbReference>
<dbReference type="InterPro" id="IPR023679">
    <property type="entry name" value="UPF0761_bac"/>
</dbReference>
<dbReference type="InterPro" id="IPR017039">
    <property type="entry name" value="Virul_fac_BrkB"/>
</dbReference>
<dbReference type="NCBIfam" id="NF002457">
    <property type="entry name" value="PRK01637.1"/>
    <property type="match status" value="1"/>
</dbReference>
<dbReference type="NCBIfam" id="TIGR00765">
    <property type="entry name" value="yihY_not_rbn"/>
    <property type="match status" value="1"/>
</dbReference>
<dbReference type="PANTHER" id="PTHR30213">
    <property type="entry name" value="INNER MEMBRANE PROTEIN YHJD"/>
    <property type="match status" value="1"/>
</dbReference>
<dbReference type="PANTHER" id="PTHR30213:SF0">
    <property type="entry name" value="UPF0761 MEMBRANE PROTEIN YIHY"/>
    <property type="match status" value="1"/>
</dbReference>
<dbReference type="Pfam" id="PF03631">
    <property type="entry name" value="Virul_fac_BrkB"/>
    <property type="match status" value="1"/>
</dbReference>
<dbReference type="PIRSF" id="PIRSF035875">
    <property type="entry name" value="RNase_BN"/>
    <property type="match status" value="1"/>
</dbReference>
<name>YIHY_ECOLC</name>
<gene>
    <name evidence="1" type="primary">yihY</name>
    <name type="ordered locus">EcolC_4132</name>
</gene>
<feature type="chain" id="PRO_1000082947" description="UPF0761 membrane protein YihY">
    <location>
        <begin position="1"/>
        <end position="290"/>
    </location>
</feature>
<feature type="transmembrane region" description="Helical" evidence="1">
    <location>
        <begin position="44"/>
        <end position="64"/>
    </location>
</feature>
<feature type="transmembrane region" description="Helical" evidence="1">
    <location>
        <begin position="104"/>
        <end position="124"/>
    </location>
</feature>
<feature type="transmembrane region" description="Helical" evidence="1">
    <location>
        <begin position="140"/>
        <end position="160"/>
    </location>
</feature>
<feature type="transmembrane region" description="Helical" evidence="1">
    <location>
        <begin position="183"/>
        <end position="203"/>
    </location>
</feature>
<feature type="transmembrane region" description="Helical" evidence="1">
    <location>
        <begin position="210"/>
        <end position="230"/>
    </location>
</feature>
<feature type="transmembrane region" description="Helical" evidence="1">
    <location>
        <begin position="244"/>
        <end position="264"/>
    </location>
</feature>
<organism>
    <name type="scientific">Escherichia coli (strain ATCC 8739 / DSM 1576 / NBRC 3972 / NCIMB 8545 / WDCM 00012 / Crooks)</name>
    <dbReference type="NCBI Taxonomy" id="481805"/>
    <lineage>
        <taxon>Bacteria</taxon>
        <taxon>Pseudomonadati</taxon>
        <taxon>Pseudomonadota</taxon>
        <taxon>Gammaproteobacteria</taxon>
        <taxon>Enterobacterales</taxon>
        <taxon>Enterobacteriaceae</taxon>
        <taxon>Escherichia</taxon>
    </lineage>
</organism>
<keyword id="KW-0997">Cell inner membrane</keyword>
<keyword id="KW-1003">Cell membrane</keyword>
<keyword id="KW-0472">Membrane</keyword>
<keyword id="KW-0812">Transmembrane</keyword>
<keyword id="KW-1133">Transmembrane helix</keyword>